<accession>B5XJA6</accession>
<reference key="1">
    <citation type="journal article" date="2008" name="J. Bacteriol.">
        <title>Genome sequence of a nephritogenic and highly transformable M49 strain of Streptococcus pyogenes.</title>
        <authorList>
            <person name="McShan W.M."/>
            <person name="Ferretti J.J."/>
            <person name="Karasawa T."/>
            <person name="Suvorov A.N."/>
            <person name="Lin S."/>
            <person name="Qin B."/>
            <person name="Jia H."/>
            <person name="Kenton S."/>
            <person name="Najar F."/>
            <person name="Wu H."/>
            <person name="Scott J."/>
            <person name="Roe B.A."/>
            <person name="Savic D.J."/>
        </authorList>
    </citation>
    <scope>NUCLEOTIDE SEQUENCE [LARGE SCALE GENOMIC DNA]</scope>
    <source>
        <strain>NZ131</strain>
    </source>
</reference>
<keyword id="KW-0067">ATP-binding</keyword>
<keyword id="KW-0963">Cytoplasm</keyword>
<keyword id="KW-1015">Disulfide bond</keyword>
<keyword id="KW-0547">Nucleotide-binding</keyword>
<keyword id="KW-0694">RNA-binding</keyword>
<keyword id="KW-0808">Transferase</keyword>
<keyword id="KW-0819">tRNA processing</keyword>
<keyword id="KW-0820">tRNA-binding</keyword>
<gene>
    <name evidence="1" type="primary">mnmA</name>
    <name type="ordered locus">Spy49_1793c</name>
</gene>
<dbReference type="EC" id="2.8.1.13" evidence="1"/>
<dbReference type="EMBL" id="CP000829">
    <property type="protein sequence ID" value="ACI62040.1"/>
    <property type="molecule type" value="Genomic_DNA"/>
</dbReference>
<dbReference type="SMR" id="B5XJA6"/>
<dbReference type="KEGG" id="soz:Spy49_1793c"/>
<dbReference type="HOGENOM" id="CLU_035188_1_0_9"/>
<dbReference type="Proteomes" id="UP000001039">
    <property type="component" value="Chromosome"/>
</dbReference>
<dbReference type="GO" id="GO:0005737">
    <property type="term" value="C:cytoplasm"/>
    <property type="evidence" value="ECO:0007669"/>
    <property type="project" value="UniProtKB-SubCell"/>
</dbReference>
<dbReference type="GO" id="GO:0005524">
    <property type="term" value="F:ATP binding"/>
    <property type="evidence" value="ECO:0007669"/>
    <property type="project" value="UniProtKB-KW"/>
</dbReference>
<dbReference type="GO" id="GO:0000049">
    <property type="term" value="F:tRNA binding"/>
    <property type="evidence" value="ECO:0007669"/>
    <property type="project" value="UniProtKB-KW"/>
</dbReference>
<dbReference type="GO" id="GO:0103016">
    <property type="term" value="F:tRNA-uridine 2-sulfurtransferase activity"/>
    <property type="evidence" value="ECO:0007669"/>
    <property type="project" value="UniProtKB-EC"/>
</dbReference>
<dbReference type="GO" id="GO:0002143">
    <property type="term" value="P:tRNA wobble position uridine thiolation"/>
    <property type="evidence" value="ECO:0007669"/>
    <property type="project" value="TreeGrafter"/>
</dbReference>
<dbReference type="CDD" id="cd01998">
    <property type="entry name" value="MnmA_TRMU-like"/>
    <property type="match status" value="1"/>
</dbReference>
<dbReference type="FunFam" id="2.30.30.280:FF:000001">
    <property type="entry name" value="tRNA-specific 2-thiouridylase MnmA"/>
    <property type="match status" value="1"/>
</dbReference>
<dbReference type="FunFam" id="2.40.30.10:FF:000023">
    <property type="entry name" value="tRNA-specific 2-thiouridylase MnmA"/>
    <property type="match status" value="1"/>
</dbReference>
<dbReference type="FunFam" id="3.40.50.620:FF:000004">
    <property type="entry name" value="tRNA-specific 2-thiouridylase MnmA"/>
    <property type="match status" value="1"/>
</dbReference>
<dbReference type="Gene3D" id="2.30.30.280">
    <property type="entry name" value="Adenine nucleotide alpha hydrolases-like domains"/>
    <property type="match status" value="1"/>
</dbReference>
<dbReference type="Gene3D" id="3.40.50.620">
    <property type="entry name" value="HUPs"/>
    <property type="match status" value="1"/>
</dbReference>
<dbReference type="Gene3D" id="2.40.30.10">
    <property type="entry name" value="Translation factors"/>
    <property type="match status" value="1"/>
</dbReference>
<dbReference type="HAMAP" id="MF_00144">
    <property type="entry name" value="tRNA_thiouridyl_MnmA"/>
    <property type="match status" value="1"/>
</dbReference>
<dbReference type="InterPro" id="IPR004506">
    <property type="entry name" value="MnmA-like"/>
</dbReference>
<dbReference type="InterPro" id="IPR046885">
    <property type="entry name" value="MnmA-like_C"/>
</dbReference>
<dbReference type="InterPro" id="IPR046884">
    <property type="entry name" value="MnmA-like_central"/>
</dbReference>
<dbReference type="InterPro" id="IPR023382">
    <property type="entry name" value="MnmA-like_central_sf"/>
</dbReference>
<dbReference type="InterPro" id="IPR014729">
    <property type="entry name" value="Rossmann-like_a/b/a_fold"/>
</dbReference>
<dbReference type="NCBIfam" id="NF001138">
    <property type="entry name" value="PRK00143.1"/>
    <property type="match status" value="1"/>
</dbReference>
<dbReference type="NCBIfam" id="TIGR00420">
    <property type="entry name" value="trmU"/>
    <property type="match status" value="1"/>
</dbReference>
<dbReference type="PANTHER" id="PTHR11933:SF5">
    <property type="entry name" value="MITOCHONDRIAL TRNA-SPECIFIC 2-THIOURIDYLASE 1"/>
    <property type="match status" value="1"/>
</dbReference>
<dbReference type="PANTHER" id="PTHR11933">
    <property type="entry name" value="TRNA 5-METHYLAMINOMETHYL-2-THIOURIDYLATE -METHYLTRANSFERASE"/>
    <property type="match status" value="1"/>
</dbReference>
<dbReference type="Pfam" id="PF03054">
    <property type="entry name" value="tRNA_Me_trans"/>
    <property type="match status" value="1"/>
</dbReference>
<dbReference type="Pfam" id="PF20258">
    <property type="entry name" value="tRNA_Me_trans_C"/>
    <property type="match status" value="1"/>
</dbReference>
<dbReference type="Pfam" id="PF20259">
    <property type="entry name" value="tRNA_Me_trans_M"/>
    <property type="match status" value="1"/>
</dbReference>
<dbReference type="SUPFAM" id="SSF52402">
    <property type="entry name" value="Adenine nucleotide alpha hydrolases-like"/>
    <property type="match status" value="1"/>
</dbReference>
<name>MNMA_STRPZ</name>
<protein>
    <recommendedName>
        <fullName evidence="1">tRNA-specific 2-thiouridylase MnmA</fullName>
        <ecNumber evidence="1">2.8.1.13</ecNumber>
    </recommendedName>
</protein>
<evidence type="ECO:0000255" key="1">
    <source>
        <dbReference type="HAMAP-Rule" id="MF_00144"/>
    </source>
</evidence>
<organism>
    <name type="scientific">Streptococcus pyogenes serotype M49 (strain NZ131)</name>
    <dbReference type="NCBI Taxonomy" id="471876"/>
    <lineage>
        <taxon>Bacteria</taxon>
        <taxon>Bacillati</taxon>
        <taxon>Bacillota</taxon>
        <taxon>Bacilli</taxon>
        <taxon>Lactobacillales</taxon>
        <taxon>Streptococcaceae</taxon>
        <taxon>Streptococcus</taxon>
    </lineage>
</organism>
<proteinExistence type="inferred from homology"/>
<sequence length="373" mass="41827">MTDNSKIRVVVGMSGGVDSSVTALLLKEQGYDVIGVFMKNWDDTDEFGVCTATEDYKDVAAVADQIGIPYYSVNFEKEYWDRVFEYFLAEYRAGRTPNPDVMCNKEIKFKAFLDYAMTLGADYVATGHYAQVKRDENGKVHMLRGADNGKDQTYFLSQLSQEQLQKTLFPLGHLQKSEVREIAERAGLATAKKKDSTGICFIGEKNFKQFLSQYLPAQKGRMMTIDGRDMGEHAGLMYYTIGQRGGLGIGGQHGGDNQPWFVVGKDLSQNILYVGQGFYHEALMSNSLDASVIHFTREMPEEFTFECTAKFRYRQPDSHVTVHVRGDKAEVVFAEPQRAITPGQAVVFYDGKECLGGGMIDMAYKNGQPCQYI</sequence>
<comment type="function">
    <text evidence="1">Catalyzes the 2-thiolation of uridine at the wobble position (U34) of tRNA, leading to the formation of s(2)U34.</text>
</comment>
<comment type="catalytic activity">
    <reaction evidence="1">
        <text>S-sulfanyl-L-cysteinyl-[protein] + uridine(34) in tRNA + AH2 + ATP = 2-thiouridine(34) in tRNA + L-cysteinyl-[protein] + A + AMP + diphosphate + H(+)</text>
        <dbReference type="Rhea" id="RHEA:47032"/>
        <dbReference type="Rhea" id="RHEA-COMP:10131"/>
        <dbReference type="Rhea" id="RHEA-COMP:11726"/>
        <dbReference type="Rhea" id="RHEA-COMP:11727"/>
        <dbReference type="Rhea" id="RHEA-COMP:11728"/>
        <dbReference type="ChEBI" id="CHEBI:13193"/>
        <dbReference type="ChEBI" id="CHEBI:15378"/>
        <dbReference type="ChEBI" id="CHEBI:17499"/>
        <dbReference type="ChEBI" id="CHEBI:29950"/>
        <dbReference type="ChEBI" id="CHEBI:30616"/>
        <dbReference type="ChEBI" id="CHEBI:33019"/>
        <dbReference type="ChEBI" id="CHEBI:61963"/>
        <dbReference type="ChEBI" id="CHEBI:65315"/>
        <dbReference type="ChEBI" id="CHEBI:87170"/>
        <dbReference type="ChEBI" id="CHEBI:456215"/>
        <dbReference type="EC" id="2.8.1.13"/>
    </reaction>
</comment>
<comment type="subcellular location">
    <subcellularLocation>
        <location evidence="1">Cytoplasm</location>
    </subcellularLocation>
</comment>
<comment type="similarity">
    <text evidence="1">Belongs to the MnmA/TRMU family.</text>
</comment>
<feature type="chain" id="PRO_1000096307" description="tRNA-specific 2-thiouridylase MnmA">
    <location>
        <begin position="1"/>
        <end position="373"/>
    </location>
</feature>
<feature type="region of interest" description="Interaction with target base in tRNA" evidence="1">
    <location>
        <begin position="98"/>
        <end position="100"/>
    </location>
</feature>
<feature type="region of interest" description="Interaction with tRNA" evidence="1">
    <location>
        <begin position="150"/>
        <end position="152"/>
    </location>
</feature>
<feature type="region of interest" description="Interaction with tRNA" evidence="1">
    <location>
        <begin position="312"/>
        <end position="313"/>
    </location>
</feature>
<feature type="active site" description="Nucleophile" evidence="1">
    <location>
        <position position="103"/>
    </location>
</feature>
<feature type="active site" description="Cysteine persulfide intermediate" evidence="1">
    <location>
        <position position="200"/>
    </location>
</feature>
<feature type="binding site" evidence="1">
    <location>
        <begin position="12"/>
        <end position="19"/>
    </location>
    <ligand>
        <name>ATP</name>
        <dbReference type="ChEBI" id="CHEBI:30616"/>
    </ligand>
</feature>
<feature type="binding site" evidence="1">
    <location>
        <position position="38"/>
    </location>
    <ligand>
        <name>ATP</name>
        <dbReference type="ChEBI" id="CHEBI:30616"/>
    </ligand>
</feature>
<feature type="binding site" evidence="1">
    <location>
        <position position="127"/>
    </location>
    <ligand>
        <name>ATP</name>
        <dbReference type="ChEBI" id="CHEBI:30616"/>
    </ligand>
</feature>
<feature type="site" description="Interaction with tRNA" evidence="1">
    <location>
        <position position="128"/>
    </location>
</feature>
<feature type="site" description="Interaction with tRNA" evidence="1">
    <location>
        <position position="344"/>
    </location>
</feature>
<feature type="disulfide bond" description="Alternate" evidence="1">
    <location>
        <begin position="103"/>
        <end position="200"/>
    </location>
</feature>